<accession>A6X0D7</accession>
<keyword id="KW-1185">Reference proteome</keyword>
<keyword id="KW-0687">Ribonucleoprotein</keyword>
<keyword id="KW-0689">Ribosomal protein</keyword>
<keyword id="KW-0694">RNA-binding</keyword>
<keyword id="KW-0699">rRNA-binding</keyword>
<dbReference type="EMBL" id="CP000758">
    <property type="protein sequence ID" value="ABS14691.1"/>
    <property type="molecule type" value="Genomic_DNA"/>
</dbReference>
<dbReference type="RefSeq" id="WP_012091912.1">
    <property type="nucleotide sequence ID" value="NC_009667.1"/>
</dbReference>
<dbReference type="SMR" id="A6X0D7"/>
<dbReference type="STRING" id="439375.Oant_1975"/>
<dbReference type="KEGG" id="oan:Oant_1975"/>
<dbReference type="PATRIC" id="fig|439375.7.peg.2077"/>
<dbReference type="eggNOG" id="COG0200">
    <property type="taxonomic scope" value="Bacteria"/>
</dbReference>
<dbReference type="HOGENOM" id="CLU_055188_4_0_5"/>
<dbReference type="PhylomeDB" id="A6X0D7"/>
<dbReference type="Proteomes" id="UP000002301">
    <property type="component" value="Chromosome 1"/>
</dbReference>
<dbReference type="GO" id="GO:0022625">
    <property type="term" value="C:cytosolic large ribosomal subunit"/>
    <property type="evidence" value="ECO:0007669"/>
    <property type="project" value="TreeGrafter"/>
</dbReference>
<dbReference type="GO" id="GO:0019843">
    <property type="term" value="F:rRNA binding"/>
    <property type="evidence" value="ECO:0007669"/>
    <property type="project" value="UniProtKB-UniRule"/>
</dbReference>
<dbReference type="GO" id="GO:0003735">
    <property type="term" value="F:structural constituent of ribosome"/>
    <property type="evidence" value="ECO:0007669"/>
    <property type="project" value="InterPro"/>
</dbReference>
<dbReference type="GO" id="GO:0006412">
    <property type="term" value="P:translation"/>
    <property type="evidence" value="ECO:0007669"/>
    <property type="project" value="UniProtKB-UniRule"/>
</dbReference>
<dbReference type="Gene3D" id="3.100.10.10">
    <property type="match status" value="1"/>
</dbReference>
<dbReference type="HAMAP" id="MF_01341">
    <property type="entry name" value="Ribosomal_uL15"/>
    <property type="match status" value="1"/>
</dbReference>
<dbReference type="InterPro" id="IPR030878">
    <property type="entry name" value="Ribosomal_uL15"/>
</dbReference>
<dbReference type="InterPro" id="IPR021131">
    <property type="entry name" value="Ribosomal_uL15/eL18"/>
</dbReference>
<dbReference type="InterPro" id="IPR036227">
    <property type="entry name" value="Ribosomal_uL15/eL18_sf"/>
</dbReference>
<dbReference type="InterPro" id="IPR005749">
    <property type="entry name" value="Ribosomal_uL15_bac-type"/>
</dbReference>
<dbReference type="InterPro" id="IPR001196">
    <property type="entry name" value="Ribosomal_uL15_CS"/>
</dbReference>
<dbReference type="NCBIfam" id="TIGR01071">
    <property type="entry name" value="rplO_bact"/>
    <property type="match status" value="1"/>
</dbReference>
<dbReference type="PANTHER" id="PTHR12934">
    <property type="entry name" value="50S RIBOSOMAL PROTEIN L15"/>
    <property type="match status" value="1"/>
</dbReference>
<dbReference type="PANTHER" id="PTHR12934:SF11">
    <property type="entry name" value="LARGE RIBOSOMAL SUBUNIT PROTEIN UL15M"/>
    <property type="match status" value="1"/>
</dbReference>
<dbReference type="Pfam" id="PF00828">
    <property type="entry name" value="Ribosomal_L27A"/>
    <property type="match status" value="1"/>
</dbReference>
<dbReference type="SUPFAM" id="SSF52080">
    <property type="entry name" value="Ribosomal proteins L15p and L18e"/>
    <property type="match status" value="1"/>
</dbReference>
<dbReference type="PROSITE" id="PS00475">
    <property type="entry name" value="RIBOSOMAL_L15"/>
    <property type="match status" value="1"/>
</dbReference>
<comment type="function">
    <text evidence="1">Binds to the 23S rRNA.</text>
</comment>
<comment type="subunit">
    <text evidence="1">Part of the 50S ribosomal subunit.</text>
</comment>
<comment type="similarity">
    <text evidence="1">Belongs to the universal ribosomal protein uL15 family.</text>
</comment>
<reference key="1">
    <citation type="journal article" date="2011" name="J. Bacteriol.">
        <title>Genome of Ochrobactrum anthropi ATCC 49188 T, a versatile opportunistic pathogen and symbiont of several eukaryotic hosts.</title>
        <authorList>
            <person name="Chain P.S."/>
            <person name="Lang D.M."/>
            <person name="Comerci D.J."/>
            <person name="Malfatti S.A."/>
            <person name="Vergez L.M."/>
            <person name="Shin M."/>
            <person name="Ugalde R.A."/>
            <person name="Garcia E."/>
            <person name="Tolmasky M.E."/>
        </authorList>
    </citation>
    <scope>NUCLEOTIDE SEQUENCE [LARGE SCALE GENOMIC DNA]</scope>
    <source>
        <strain>ATCC 49188 / DSM 6882 / CCUG 24695 / JCM 21032 / LMG 3331 / NBRC 15819 / NCTC 12168 / Alc 37</strain>
    </source>
</reference>
<proteinExistence type="inferred from homology"/>
<protein>
    <recommendedName>
        <fullName evidence="1">Large ribosomal subunit protein uL15</fullName>
    </recommendedName>
    <alternativeName>
        <fullName evidence="3">50S ribosomal protein L15</fullName>
    </alternativeName>
</protein>
<evidence type="ECO:0000255" key="1">
    <source>
        <dbReference type="HAMAP-Rule" id="MF_01341"/>
    </source>
</evidence>
<evidence type="ECO:0000256" key="2">
    <source>
        <dbReference type="SAM" id="MobiDB-lite"/>
    </source>
</evidence>
<evidence type="ECO:0000305" key="3"/>
<organism>
    <name type="scientific">Brucella anthropi (strain ATCC 49188 / DSM 6882 / CCUG 24695 / JCM 21032 / LMG 3331 / NBRC 15819 / NCTC 12168 / Alc 37)</name>
    <name type="common">Ochrobactrum anthropi</name>
    <dbReference type="NCBI Taxonomy" id="439375"/>
    <lineage>
        <taxon>Bacteria</taxon>
        <taxon>Pseudomonadati</taxon>
        <taxon>Pseudomonadota</taxon>
        <taxon>Alphaproteobacteria</taxon>
        <taxon>Hyphomicrobiales</taxon>
        <taxon>Brucellaceae</taxon>
        <taxon>Brucella/Ochrobactrum group</taxon>
        <taxon>Brucella</taxon>
    </lineage>
</organism>
<sequence length="156" mass="16215">MKLNDLRDKPGSVKARKRVGRGIGSGTGKTGGRGVKGQKSRSGVAINGFEGGQMPIYRRLPKRGFTNIFAKSFNVVSLGRVQAAIDAGKLDAKAVVNLDSLKAAGVIRRAKDGVRILSDGELKAKVAFEVAGASKAAVEKIEKAGGSIKLPEAAAE</sequence>
<name>RL15_BRUA4</name>
<gene>
    <name evidence="1" type="primary">rplO</name>
    <name type="ordered locus">Oant_1975</name>
</gene>
<feature type="chain" id="PRO_1000054503" description="Large ribosomal subunit protein uL15">
    <location>
        <begin position="1"/>
        <end position="156"/>
    </location>
</feature>
<feature type="region of interest" description="Disordered" evidence="2">
    <location>
        <begin position="1"/>
        <end position="40"/>
    </location>
</feature>
<feature type="compositionally biased region" description="Basic and acidic residues" evidence="2">
    <location>
        <begin position="1"/>
        <end position="11"/>
    </location>
</feature>
<feature type="compositionally biased region" description="Gly residues" evidence="2">
    <location>
        <begin position="21"/>
        <end position="35"/>
    </location>
</feature>